<organism>
    <name type="scientific">Streptococcus pyogenes serotype M18 (strain MGAS8232)</name>
    <dbReference type="NCBI Taxonomy" id="186103"/>
    <lineage>
        <taxon>Bacteria</taxon>
        <taxon>Bacillati</taxon>
        <taxon>Bacillota</taxon>
        <taxon>Bacilli</taxon>
        <taxon>Lactobacillales</taxon>
        <taxon>Streptococcaceae</taxon>
        <taxon>Streptococcus</taxon>
    </lineage>
</organism>
<feature type="chain" id="PRO_0000216993" description="UPF0297 protein spyM18_2172">
    <location>
        <begin position="1"/>
        <end position="89"/>
    </location>
</feature>
<protein>
    <recommendedName>
        <fullName>UPF0297 protein spyM18_2172</fullName>
    </recommendedName>
</protein>
<name>Y2172_STRP8</name>
<sequence length="89" mass="10364">MGFTDETVRFKLDDGDKRQISETLTAVYHSLDEKGYNPINQIVGYVLSGDPAYVPRYNDARNQIRKYERDEIVEELVRYYLQGNGIDVK</sequence>
<reference key="1">
    <citation type="journal article" date="2002" name="Proc. Natl. Acad. Sci. U.S.A.">
        <title>Genome sequence and comparative microarray analysis of serotype M18 group A Streptococcus strains associated with acute rheumatic fever outbreaks.</title>
        <authorList>
            <person name="Smoot J.C."/>
            <person name="Barbian K.D."/>
            <person name="Van Gompel J.J."/>
            <person name="Smoot L.M."/>
            <person name="Chaussee M.S."/>
            <person name="Sylva G.L."/>
            <person name="Sturdevant D.E."/>
            <person name="Ricklefs S.M."/>
            <person name="Porcella S.F."/>
            <person name="Parkins L.D."/>
            <person name="Beres S.B."/>
            <person name="Campbell D.S."/>
            <person name="Smith T.M."/>
            <person name="Zhang Q."/>
            <person name="Kapur V."/>
            <person name="Daly J.A."/>
            <person name="Veasy L.G."/>
            <person name="Musser J.M."/>
        </authorList>
    </citation>
    <scope>NUCLEOTIDE SEQUENCE [LARGE SCALE GENOMIC DNA]</scope>
    <source>
        <strain>MGAS8232</strain>
    </source>
</reference>
<dbReference type="EMBL" id="AE009949">
    <property type="protein sequence ID" value="AAL98616.1"/>
    <property type="molecule type" value="Genomic_DNA"/>
</dbReference>
<dbReference type="RefSeq" id="WP_002982194.1">
    <property type="nucleotide sequence ID" value="NC_003485.1"/>
</dbReference>
<dbReference type="SMR" id="P60362"/>
<dbReference type="KEGG" id="spm:spyM18_2172"/>
<dbReference type="HOGENOM" id="CLU_162466_0_0_9"/>
<dbReference type="HAMAP" id="MF_01507">
    <property type="entry name" value="UPF0297"/>
    <property type="match status" value="1"/>
</dbReference>
<dbReference type="InterPro" id="IPR009309">
    <property type="entry name" value="IreB"/>
</dbReference>
<dbReference type="NCBIfam" id="NF003997">
    <property type="entry name" value="PRK05473.1"/>
    <property type="match status" value="1"/>
</dbReference>
<dbReference type="PANTHER" id="PTHR40067">
    <property type="entry name" value="UPF0297 PROTEIN YRZL"/>
    <property type="match status" value="1"/>
</dbReference>
<dbReference type="PANTHER" id="PTHR40067:SF1">
    <property type="entry name" value="UPF0297 PROTEIN YRZL"/>
    <property type="match status" value="1"/>
</dbReference>
<dbReference type="Pfam" id="PF06135">
    <property type="entry name" value="IreB"/>
    <property type="match status" value="1"/>
</dbReference>
<dbReference type="PIRSF" id="PIRSF037258">
    <property type="entry name" value="DUF965_bac"/>
    <property type="match status" value="1"/>
</dbReference>
<evidence type="ECO:0000305" key="1"/>
<gene>
    <name type="ordered locus">spyM18_2172</name>
</gene>
<comment type="similarity">
    <text evidence="1">Belongs to the UPF0297 family.</text>
</comment>
<proteinExistence type="inferred from homology"/>
<accession>P60362</accession>
<accession>Q99XP3</accession>